<dbReference type="EC" id="2.1.1.228" evidence="1"/>
<dbReference type="EMBL" id="CP000503">
    <property type="protein sequence ID" value="ABM25811.1"/>
    <property type="molecule type" value="Genomic_DNA"/>
</dbReference>
<dbReference type="RefSeq" id="WP_011790263.1">
    <property type="nucleotide sequence ID" value="NC_008750.1"/>
</dbReference>
<dbReference type="SMR" id="A1RMB6"/>
<dbReference type="GeneID" id="67442686"/>
<dbReference type="KEGG" id="shw:Sputw3181_2994"/>
<dbReference type="HOGENOM" id="CLU_047363_0_1_6"/>
<dbReference type="Proteomes" id="UP000002597">
    <property type="component" value="Chromosome"/>
</dbReference>
<dbReference type="GO" id="GO:0005829">
    <property type="term" value="C:cytosol"/>
    <property type="evidence" value="ECO:0007669"/>
    <property type="project" value="TreeGrafter"/>
</dbReference>
<dbReference type="GO" id="GO:0052906">
    <property type="term" value="F:tRNA (guanine(37)-N1)-methyltransferase activity"/>
    <property type="evidence" value="ECO:0007669"/>
    <property type="project" value="UniProtKB-UniRule"/>
</dbReference>
<dbReference type="GO" id="GO:0002939">
    <property type="term" value="P:tRNA N1-guanine methylation"/>
    <property type="evidence" value="ECO:0007669"/>
    <property type="project" value="TreeGrafter"/>
</dbReference>
<dbReference type="CDD" id="cd18080">
    <property type="entry name" value="TrmD-like"/>
    <property type="match status" value="1"/>
</dbReference>
<dbReference type="FunFam" id="1.10.1270.20:FF:000001">
    <property type="entry name" value="tRNA (guanine-N(1)-)-methyltransferase"/>
    <property type="match status" value="1"/>
</dbReference>
<dbReference type="FunFam" id="3.40.1280.10:FF:000001">
    <property type="entry name" value="tRNA (guanine-N(1)-)-methyltransferase"/>
    <property type="match status" value="1"/>
</dbReference>
<dbReference type="Gene3D" id="3.40.1280.10">
    <property type="match status" value="1"/>
</dbReference>
<dbReference type="Gene3D" id="1.10.1270.20">
    <property type="entry name" value="tRNA(m1g37)methyltransferase, domain 2"/>
    <property type="match status" value="1"/>
</dbReference>
<dbReference type="HAMAP" id="MF_00605">
    <property type="entry name" value="TrmD"/>
    <property type="match status" value="1"/>
</dbReference>
<dbReference type="InterPro" id="IPR029028">
    <property type="entry name" value="Alpha/beta_knot_MTases"/>
</dbReference>
<dbReference type="InterPro" id="IPR023148">
    <property type="entry name" value="tRNA_m1G_MeTrfase_C_sf"/>
</dbReference>
<dbReference type="InterPro" id="IPR002649">
    <property type="entry name" value="tRNA_m1G_MeTrfase_TrmD"/>
</dbReference>
<dbReference type="InterPro" id="IPR029026">
    <property type="entry name" value="tRNA_m1G_MTases_N"/>
</dbReference>
<dbReference type="InterPro" id="IPR016009">
    <property type="entry name" value="tRNA_MeTrfase_TRMD/TRM10"/>
</dbReference>
<dbReference type="NCBIfam" id="NF000648">
    <property type="entry name" value="PRK00026.1"/>
    <property type="match status" value="1"/>
</dbReference>
<dbReference type="NCBIfam" id="TIGR00088">
    <property type="entry name" value="trmD"/>
    <property type="match status" value="1"/>
</dbReference>
<dbReference type="PANTHER" id="PTHR46417">
    <property type="entry name" value="TRNA (GUANINE-N(1)-)-METHYLTRANSFERASE"/>
    <property type="match status" value="1"/>
</dbReference>
<dbReference type="PANTHER" id="PTHR46417:SF1">
    <property type="entry name" value="TRNA (GUANINE-N(1)-)-METHYLTRANSFERASE"/>
    <property type="match status" value="1"/>
</dbReference>
<dbReference type="Pfam" id="PF01746">
    <property type="entry name" value="tRNA_m1G_MT"/>
    <property type="match status" value="1"/>
</dbReference>
<dbReference type="PIRSF" id="PIRSF000386">
    <property type="entry name" value="tRNA_mtase"/>
    <property type="match status" value="1"/>
</dbReference>
<dbReference type="SUPFAM" id="SSF75217">
    <property type="entry name" value="alpha/beta knot"/>
    <property type="match status" value="1"/>
</dbReference>
<accession>A1RMB6</accession>
<feature type="chain" id="PRO_1000006522" description="tRNA (guanine-N(1)-)-methyltransferase">
    <location>
        <begin position="1"/>
        <end position="248"/>
    </location>
</feature>
<feature type="binding site" evidence="1">
    <location>
        <position position="113"/>
    </location>
    <ligand>
        <name>S-adenosyl-L-methionine</name>
        <dbReference type="ChEBI" id="CHEBI:59789"/>
    </ligand>
</feature>
<feature type="binding site" evidence="1">
    <location>
        <begin position="133"/>
        <end position="138"/>
    </location>
    <ligand>
        <name>S-adenosyl-L-methionine</name>
        <dbReference type="ChEBI" id="CHEBI:59789"/>
    </ligand>
</feature>
<evidence type="ECO:0000255" key="1">
    <source>
        <dbReference type="HAMAP-Rule" id="MF_00605"/>
    </source>
</evidence>
<keyword id="KW-0963">Cytoplasm</keyword>
<keyword id="KW-0489">Methyltransferase</keyword>
<keyword id="KW-0949">S-adenosyl-L-methionine</keyword>
<keyword id="KW-0808">Transferase</keyword>
<keyword id="KW-0819">tRNA processing</keyword>
<sequence>MWLGVITLFPEMFRAVTDFGVTGRAVKNGLLELHTWNPRDFTHDRHNTVDDRPYGGGPGMLMMVQPLRDAIHAAKAAAGEEAKVIYLSPQGRKLDQQGVTELAKSSRLILVCGRYEGIDERIIQTEVDEEWSVGDYVLSGGELPAMTMIDAVSRLVPGVLGKQASAEQDSFSDGLLDCPHYTRPESLDGLDVPAVLLSGNHEQIRLWRLQQSLGRTLLRRPELLQNLALTDEQSTLLAQFVEAMDKHA</sequence>
<reference key="1">
    <citation type="submission" date="2006-12" db="EMBL/GenBank/DDBJ databases">
        <title>Complete sequence of Shewanella sp. W3-18-1.</title>
        <authorList>
            <consortium name="US DOE Joint Genome Institute"/>
            <person name="Copeland A."/>
            <person name="Lucas S."/>
            <person name="Lapidus A."/>
            <person name="Barry K."/>
            <person name="Detter J.C."/>
            <person name="Glavina del Rio T."/>
            <person name="Hammon N."/>
            <person name="Israni S."/>
            <person name="Dalin E."/>
            <person name="Tice H."/>
            <person name="Pitluck S."/>
            <person name="Chain P."/>
            <person name="Malfatti S."/>
            <person name="Shin M."/>
            <person name="Vergez L."/>
            <person name="Schmutz J."/>
            <person name="Larimer F."/>
            <person name="Land M."/>
            <person name="Hauser L."/>
            <person name="Kyrpides N."/>
            <person name="Lykidis A."/>
            <person name="Tiedje J."/>
            <person name="Richardson P."/>
        </authorList>
    </citation>
    <scope>NUCLEOTIDE SEQUENCE [LARGE SCALE GENOMIC DNA]</scope>
    <source>
        <strain>W3-18-1</strain>
    </source>
</reference>
<organism>
    <name type="scientific">Shewanella sp. (strain W3-18-1)</name>
    <dbReference type="NCBI Taxonomy" id="351745"/>
    <lineage>
        <taxon>Bacteria</taxon>
        <taxon>Pseudomonadati</taxon>
        <taxon>Pseudomonadota</taxon>
        <taxon>Gammaproteobacteria</taxon>
        <taxon>Alteromonadales</taxon>
        <taxon>Shewanellaceae</taxon>
        <taxon>Shewanella</taxon>
    </lineage>
</organism>
<comment type="function">
    <text evidence="1">Specifically methylates guanosine-37 in various tRNAs.</text>
</comment>
<comment type="catalytic activity">
    <reaction evidence="1">
        <text>guanosine(37) in tRNA + S-adenosyl-L-methionine = N(1)-methylguanosine(37) in tRNA + S-adenosyl-L-homocysteine + H(+)</text>
        <dbReference type="Rhea" id="RHEA:36899"/>
        <dbReference type="Rhea" id="RHEA-COMP:10145"/>
        <dbReference type="Rhea" id="RHEA-COMP:10147"/>
        <dbReference type="ChEBI" id="CHEBI:15378"/>
        <dbReference type="ChEBI" id="CHEBI:57856"/>
        <dbReference type="ChEBI" id="CHEBI:59789"/>
        <dbReference type="ChEBI" id="CHEBI:73542"/>
        <dbReference type="ChEBI" id="CHEBI:74269"/>
        <dbReference type="EC" id="2.1.1.228"/>
    </reaction>
</comment>
<comment type="subunit">
    <text evidence="1">Homodimer.</text>
</comment>
<comment type="subcellular location">
    <subcellularLocation>
        <location evidence="1">Cytoplasm</location>
    </subcellularLocation>
</comment>
<comment type="similarity">
    <text evidence="1">Belongs to the RNA methyltransferase TrmD family.</text>
</comment>
<gene>
    <name evidence="1" type="primary">trmD</name>
    <name type="ordered locus">Sputw3181_2994</name>
</gene>
<protein>
    <recommendedName>
        <fullName evidence="1">tRNA (guanine-N(1)-)-methyltransferase</fullName>
        <ecNumber evidence="1">2.1.1.228</ecNumber>
    </recommendedName>
    <alternativeName>
        <fullName evidence="1">M1G-methyltransferase</fullName>
    </alternativeName>
    <alternativeName>
        <fullName evidence="1">tRNA [GM37] methyltransferase</fullName>
    </alternativeName>
</protein>
<proteinExistence type="inferred from homology"/>
<name>TRMD_SHESW</name>